<organism>
    <name type="scientific">Bordetella pertussis (strain Tohama I / ATCC BAA-589 / NCTC 13251)</name>
    <dbReference type="NCBI Taxonomy" id="257313"/>
    <lineage>
        <taxon>Bacteria</taxon>
        <taxon>Pseudomonadati</taxon>
        <taxon>Pseudomonadota</taxon>
        <taxon>Betaproteobacteria</taxon>
        <taxon>Burkholderiales</taxon>
        <taxon>Alcaligenaceae</taxon>
        <taxon>Bordetella</taxon>
    </lineage>
</organism>
<evidence type="ECO:0000255" key="1">
    <source>
        <dbReference type="HAMAP-Rule" id="MF_00528"/>
    </source>
</evidence>
<proteinExistence type="inferred from homology"/>
<protein>
    <recommendedName>
        <fullName evidence="1">dTTP/UTP pyrophosphatase</fullName>
        <shortName evidence="1">dTTPase/UTPase</shortName>
        <ecNumber evidence="1">3.6.1.9</ecNumber>
    </recommendedName>
    <alternativeName>
        <fullName evidence="1">Nucleoside triphosphate pyrophosphatase</fullName>
    </alternativeName>
    <alternativeName>
        <fullName evidence="1">Nucleotide pyrophosphatase</fullName>
        <shortName evidence="1">Nucleotide PPase</shortName>
    </alternativeName>
</protein>
<feature type="chain" id="PRO_0000122997" description="dTTP/UTP pyrophosphatase">
    <location>
        <begin position="1"/>
        <end position="207"/>
    </location>
</feature>
<feature type="active site" description="Proton acceptor" evidence="1">
    <location>
        <position position="87"/>
    </location>
</feature>
<feature type="site" description="Important for substrate specificity" evidence="1">
    <location>
        <position position="21"/>
    </location>
</feature>
<feature type="site" description="Important for substrate specificity" evidence="1">
    <location>
        <position position="88"/>
    </location>
</feature>
<feature type="site" description="Important for substrate specificity" evidence="1">
    <location>
        <position position="170"/>
    </location>
</feature>
<keyword id="KW-0963">Cytoplasm</keyword>
<keyword id="KW-0378">Hydrolase</keyword>
<keyword id="KW-0546">Nucleotide metabolism</keyword>
<keyword id="KW-1185">Reference proteome</keyword>
<reference key="1">
    <citation type="journal article" date="2003" name="Nat. Genet.">
        <title>Comparative analysis of the genome sequences of Bordetella pertussis, Bordetella parapertussis and Bordetella bronchiseptica.</title>
        <authorList>
            <person name="Parkhill J."/>
            <person name="Sebaihia M."/>
            <person name="Preston A."/>
            <person name="Murphy L.D."/>
            <person name="Thomson N.R."/>
            <person name="Harris D.E."/>
            <person name="Holden M.T.G."/>
            <person name="Churcher C.M."/>
            <person name="Bentley S.D."/>
            <person name="Mungall K.L."/>
            <person name="Cerdeno-Tarraga A.-M."/>
            <person name="Temple L."/>
            <person name="James K.D."/>
            <person name="Harris B."/>
            <person name="Quail M.A."/>
            <person name="Achtman M."/>
            <person name="Atkin R."/>
            <person name="Baker S."/>
            <person name="Basham D."/>
            <person name="Bason N."/>
            <person name="Cherevach I."/>
            <person name="Chillingworth T."/>
            <person name="Collins M."/>
            <person name="Cronin A."/>
            <person name="Davis P."/>
            <person name="Doggett J."/>
            <person name="Feltwell T."/>
            <person name="Goble A."/>
            <person name="Hamlin N."/>
            <person name="Hauser H."/>
            <person name="Holroyd S."/>
            <person name="Jagels K."/>
            <person name="Leather S."/>
            <person name="Moule S."/>
            <person name="Norberczak H."/>
            <person name="O'Neil S."/>
            <person name="Ormond D."/>
            <person name="Price C."/>
            <person name="Rabbinowitsch E."/>
            <person name="Rutter S."/>
            <person name="Sanders M."/>
            <person name="Saunders D."/>
            <person name="Seeger K."/>
            <person name="Sharp S."/>
            <person name="Simmonds M."/>
            <person name="Skelton J."/>
            <person name="Squares R."/>
            <person name="Squares S."/>
            <person name="Stevens K."/>
            <person name="Unwin L."/>
            <person name="Whitehead S."/>
            <person name="Barrell B.G."/>
            <person name="Maskell D.J."/>
        </authorList>
    </citation>
    <scope>NUCLEOTIDE SEQUENCE [LARGE SCALE GENOMIC DNA]</scope>
    <source>
        <strain>Tohama I / ATCC BAA-589 / NCTC 13251</strain>
    </source>
</reference>
<dbReference type="EC" id="3.6.1.9" evidence="1"/>
<dbReference type="EMBL" id="BX640418">
    <property type="protein sequence ID" value="CAE42587.1"/>
    <property type="molecule type" value="Genomic_DNA"/>
</dbReference>
<dbReference type="RefSeq" id="NP_880952.1">
    <property type="nucleotide sequence ID" value="NC_002929.2"/>
</dbReference>
<dbReference type="RefSeq" id="WP_010930865.1">
    <property type="nucleotide sequence ID" value="NZ_CP039022.1"/>
</dbReference>
<dbReference type="SMR" id="Q7VWE3"/>
<dbReference type="STRING" id="257313.BP2314"/>
<dbReference type="PaxDb" id="257313-BP2314"/>
<dbReference type="KEGG" id="bpe:BP2314"/>
<dbReference type="PATRIC" id="fig|257313.5.peg.2494"/>
<dbReference type="eggNOG" id="COG0424">
    <property type="taxonomic scope" value="Bacteria"/>
</dbReference>
<dbReference type="HOGENOM" id="CLU_040416_2_1_4"/>
<dbReference type="Proteomes" id="UP000002676">
    <property type="component" value="Chromosome"/>
</dbReference>
<dbReference type="GO" id="GO:0005737">
    <property type="term" value="C:cytoplasm"/>
    <property type="evidence" value="ECO:0007669"/>
    <property type="project" value="UniProtKB-SubCell"/>
</dbReference>
<dbReference type="GO" id="GO:0036218">
    <property type="term" value="F:dTTP diphosphatase activity"/>
    <property type="evidence" value="ECO:0007669"/>
    <property type="project" value="RHEA"/>
</dbReference>
<dbReference type="GO" id="GO:0036221">
    <property type="term" value="F:UTP diphosphatase activity"/>
    <property type="evidence" value="ECO:0007669"/>
    <property type="project" value="RHEA"/>
</dbReference>
<dbReference type="GO" id="GO:0009117">
    <property type="term" value="P:nucleotide metabolic process"/>
    <property type="evidence" value="ECO:0007669"/>
    <property type="project" value="UniProtKB-KW"/>
</dbReference>
<dbReference type="CDD" id="cd00555">
    <property type="entry name" value="Maf"/>
    <property type="match status" value="1"/>
</dbReference>
<dbReference type="Gene3D" id="3.90.950.10">
    <property type="match status" value="1"/>
</dbReference>
<dbReference type="HAMAP" id="MF_00528">
    <property type="entry name" value="Maf"/>
    <property type="match status" value="1"/>
</dbReference>
<dbReference type="InterPro" id="IPR029001">
    <property type="entry name" value="ITPase-like_fam"/>
</dbReference>
<dbReference type="InterPro" id="IPR003697">
    <property type="entry name" value="Maf-like"/>
</dbReference>
<dbReference type="NCBIfam" id="TIGR00172">
    <property type="entry name" value="maf"/>
    <property type="match status" value="1"/>
</dbReference>
<dbReference type="PANTHER" id="PTHR43213">
    <property type="entry name" value="BIFUNCTIONAL DTTP/UTP PYROPHOSPHATASE/METHYLTRANSFERASE PROTEIN-RELATED"/>
    <property type="match status" value="1"/>
</dbReference>
<dbReference type="PANTHER" id="PTHR43213:SF5">
    <property type="entry name" value="BIFUNCTIONAL DTTP_UTP PYROPHOSPHATASE_METHYLTRANSFERASE PROTEIN-RELATED"/>
    <property type="match status" value="1"/>
</dbReference>
<dbReference type="Pfam" id="PF02545">
    <property type="entry name" value="Maf"/>
    <property type="match status" value="1"/>
</dbReference>
<dbReference type="PIRSF" id="PIRSF006305">
    <property type="entry name" value="Maf"/>
    <property type="match status" value="1"/>
</dbReference>
<dbReference type="SUPFAM" id="SSF52972">
    <property type="entry name" value="ITPase-like"/>
    <property type="match status" value="1"/>
</dbReference>
<gene>
    <name type="ordered locus">BP2314</name>
</gene>
<name>NTPPA_BORPE</name>
<accession>Q7VWE3</accession>
<sequence length="207" mass="22209">MSDATLAADPPRLYLASASPRRRELLLQIGLTHTVLRVPAPPGEDEPQHPGEAACDYVRRTARDKAERGQAWLHSQQLPDLPLLAADTTVILDGIVLGKPADRADALRMLAALSGREHEVHAAVALCHQGRLYEDVSITRVRMRALEQAELQRYCDSGEPYGKAGAYGIQGLAGAFVSHIAGSYTGVMGLPIYETAALLRSAGIAVP</sequence>
<comment type="function">
    <text evidence="1">Nucleoside triphosphate pyrophosphatase that hydrolyzes dTTP and UTP. May have a dual role in cell division arrest and in preventing the incorporation of modified nucleotides into cellular nucleic acids.</text>
</comment>
<comment type="catalytic activity">
    <reaction evidence="1">
        <text>dTTP + H2O = dTMP + diphosphate + H(+)</text>
        <dbReference type="Rhea" id="RHEA:28534"/>
        <dbReference type="ChEBI" id="CHEBI:15377"/>
        <dbReference type="ChEBI" id="CHEBI:15378"/>
        <dbReference type="ChEBI" id="CHEBI:33019"/>
        <dbReference type="ChEBI" id="CHEBI:37568"/>
        <dbReference type="ChEBI" id="CHEBI:63528"/>
        <dbReference type="EC" id="3.6.1.9"/>
    </reaction>
</comment>
<comment type="catalytic activity">
    <reaction evidence="1">
        <text>UTP + H2O = UMP + diphosphate + H(+)</text>
        <dbReference type="Rhea" id="RHEA:29395"/>
        <dbReference type="ChEBI" id="CHEBI:15377"/>
        <dbReference type="ChEBI" id="CHEBI:15378"/>
        <dbReference type="ChEBI" id="CHEBI:33019"/>
        <dbReference type="ChEBI" id="CHEBI:46398"/>
        <dbReference type="ChEBI" id="CHEBI:57865"/>
        <dbReference type="EC" id="3.6.1.9"/>
    </reaction>
</comment>
<comment type="cofactor">
    <cofactor evidence="1">
        <name>a divalent metal cation</name>
        <dbReference type="ChEBI" id="CHEBI:60240"/>
    </cofactor>
</comment>
<comment type="subcellular location">
    <subcellularLocation>
        <location evidence="1">Cytoplasm</location>
    </subcellularLocation>
</comment>
<comment type="similarity">
    <text evidence="1">Belongs to the Maf family. YhdE subfamily.</text>
</comment>